<feature type="chain" id="PRO_0000327461" description="26S proteasome non-ATPase regulatory subunit 13">
    <location>
        <begin position="1"/>
        <end position="385"/>
    </location>
</feature>
<feature type="domain" description="PCI" evidence="2">
    <location>
        <begin position="176"/>
        <end position="347"/>
    </location>
</feature>
<comment type="function">
    <text evidence="1">Acts as a regulatory subunit of the 26S proteasome which is involved in the ATP-dependent degradation of ubiquitinated proteins.</text>
</comment>
<comment type="similarity">
    <text evidence="3">Belongs to the proteasome subunit S11 family.</text>
</comment>
<protein>
    <recommendedName>
        <fullName>26S proteasome non-ATPase regulatory subunit 13</fullName>
    </recommendedName>
    <alternativeName>
        <fullName>26S proteasome regulatory subunit RPN9</fullName>
    </alternativeName>
    <alternativeName>
        <fullName>26S proteasome regulatory subunit S11</fullName>
    </alternativeName>
</protein>
<organism>
    <name type="scientific">Dictyostelium discoideum</name>
    <name type="common">Social amoeba</name>
    <dbReference type="NCBI Taxonomy" id="44689"/>
    <lineage>
        <taxon>Eukaryota</taxon>
        <taxon>Amoebozoa</taxon>
        <taxon>Evosea</taxon>
        <taxon>Eumycetozoa</taxon>
        <taxon>Dictyostelia</taxon>
        <taxon>Dictyosteliales</taxon>
        <taxon>Dictyosteliaceae</taxon>
        <taxon>Dictyostelium</taxon>
    </lineage>
</organism>
<name>PSD13_DICDI</name>
<accession>Q54NQ0</accession>
<evidence type="ECO:0000250" key="1"/>
<evidence type="ECO:0000255" key="2">
    <source>
        <dbReference type="PROSITE-ProRule" id="PRU01185"/>
    </source>
</evidence>
<evidence type="ECO:0000305" key="3"/>
<sequence>MATYKPLEYLEHLKKIVPDLSDQINNIKDTYENKLWHQLTKQIEMIIISPQLLEKKELFNFYTNFIRDFENKLRPLSLVEICIAVARQFDTDESRKFIETISQKVKKDKSAYILTLSYIANMNLRSGVAEQLQDCKKTLELAKEELQGVTGLDTIVYSSFYRVSTDYHMAKSQASEFYKNALMYLSYCKLETISQEEQASLAYNLCIAALVGENVYGFGDLIANPILKALEGSQHNWLIAFLKAFNIGDIQQFEGLMSQHRDIISTQTAITNNMQKLRQKISILSLLELAFRTPSDKRSISFSKIAQATKLPLGEIEHLLMKSLSLNLIKGSIDQTVEIIHITWVTPRILDLNQINSMNNRIAEWTEKAKTSLRLVEDDTVDLVA</sequence>
<gene>
    <name type="primary">psmD13</name>
    <name type="ORF">DDB_G0285105</name>
</gene>
<dbReference type="EMBL" id="AAFI02000074">
    <property type="protein sequence ID" value="EAL64865.1"/>
    <property type="molecule type" value="Genomic_DNA"/>
</dbReference>
<dbReference type="RefSeq" id="XP_639866.1">
    <property type="nucleotide sequence ID" value="XM_634774.1"/>
</dbReference>
<dbReference type="SMR" id="Q54NQ0"/>
<dbReference type="FunCoup" id="Q54NQ0">
    <property type="interactions" value="1127"/>
</dbReference>
<dbReference type="STRING" id="44689.Q54NQ0"/>
<dbReference type="PaxDb" id="44689-DDB0233004"/>
<dbReference type="EnsemblProtists" id="EAL64865">
    <property type="protein sequence ID" value="EAL64865"/>
    <property type="gene ID" value="DDB_G0285105"/>
</dbReference>
<dbReference type="GeneID" id="8624937"/>
<dbReference type="KEGG" id="ddi:DDB_G0285105"/>
<dbReference type="dictyBase" id="DDB_G0285105">
    <property type="gene designation" value="psmD13"/>
</dbReference>
<dbReference type="VEuPathDB" id="AmoebaDB:DDB_G0285105"/>
<dbReference type="eggNOG" id="KOG2908">
    <property type="taxonomic scope" value="Eukaryota"/>
</dbReference>
<dbReference type="HOGENOM" id="CLU_042989_0_0_1"/>
<dbReference type="InParanoid" id="Q54NQ0"/>
<dbReference type="OMA" id="SFEDYWE"/>
<dbReference type="PhylomeDB" id="Q54NQ0"/>
<dbReference type="Reactome" id="R-DDI-1236978">
    <property type="pathway name" value="Cross-presentation of soluble exogenous antigens (endosomes)"/>
</dbReference>
<dbReference type="Reactome" id="R-DDI-174084">
    <property type="pathway name" value="Autodegradation of Cdh1 by Cdh1:APC/C"/>
</dbReference>
<dbReference type="Reactome" id="R-DDI-174154">
    <property type="pathway name" value="APC/C:Cdc20 mediated degradation of Securin"/>
</dbReference>
<dbReference type="Reactome" id="R-DDI-174178">
    <property type="pathway name" value="APC/C:Cdh1 mediated degradation of Cdc20 and other APC/C:Cdh1 targeted proteins in late mitosis/early G1"/>
</dbReference>
<dbReference type="Reactome" id="R-DDI-2467813">
    <property type="pathway name" value="Separation of Sister Chromatids"/>
</dbReference>
<dbReference type="Reactome" id="R-DDI-349425">
    <property type="pathway name" value="Autodegradation of the E3 ubiquitin ligase COP1"/>
</dbReference>
<dbReference type="Reactome" id="R-DDI-382556">
    <property type="pathway name" value="ABC-family proteins mediated transport"/>
</dbReference>
<dbReference type="Reactome" id="R-DDI-450408">
    <property type="pathway name" value="AUF1 (hnRNP D0) binds and destabilizes mRNA"/>
</dbReference>
<dbReference type="Reactome" id="R-DDI-4641258">
    <property type="pathway name" value="Degradation of DVL"/>
</dbReference>
<dbReference type="Reactome" id="R-DDI-5632684">
    <property type="pathway name" value="Hedgehog 'on' state"/>
</dbReference>
<dbReference type="Reactome" id="R-DDI-5658442">
    <property type="pathway name" value="Regulation of RAS by GAPs"/>
</dbReference>
<dbReference type="Reactome" id="R-DDI-5687128">
    <property type="pathway name" value="MAPK6/MAPK4 signaling"/>
</dbReference>
<dbReference type="Reactome" id="R-DDI-5689603">
    <property type="pathway name" value="UCH proteinases"/>
</dbReference>
<dbReference type="Reactome" id="R-DDI-5689880">
    <property type="pathway name" value="Ub-specific processing proteases"/>
</dbReference>
<dbReference type="Reactome" id="R-DDI-6798695">
    <property type="pathway name" value="Neutrophil degranulation"/>
</dbReference>
<dbReference type="Reactome" id="R-DDI-68949">
    <property type="pathway name" value="Orc1 removal from chromatin"/>
</dbReference>
<dbReference type="Reactome" id="R-DDI-69017">
    <property type="pathway name" value="CDK-mediated phosphorylation and removal of Cdc6"/>
</dbReference>
<dbReference type="Reactome" id="R-DDI-69601">
    <property type="pathway name" value="Ubiquitin Mediated Degradation of Phosphorylated Cdc25A"/>
</dbReference>
<dbReference type="Reactome" id="R-DDI-8854050">
    <property type="pathway name" value="FBXL7 down-regulates AURKA during mitotic entry and in early mitosis"/>
</dbReference>
<dbReference type="Reactome" id="R-DDI-8948751">
    <property type="pathway name" value="Regulation of PTEN stability and activity"/>
</dbReference>
<dbReference type="Reactome" id="R-DDI-8951664">
    <property type="pathway name" value="Neddylation"/>
</dbReference>
<dbReference type="Reactome" id="R-DDI-9755511">
    <property type="pathway name" value="KEAP1-NFE2L2 pathway"/>
</dbReference>
<dbReference type="Reactome" id="R-DDI-983168">
    <property type="pathway name" value="Antigen processing: Ubiquitination &amp; Proteasome degradation"/>
</dbReference>
<dbReference type="Reactome" id="R-DDI-9907900">
    <property type="pathway name" value="Proteasome assembly"/>
</dbReference>
<dbReference type="PRO" id="PR:Q54NQ0"/>
<dbReference type="Proteomes" id="UP000002195">
    <property type="component" value="Chromosome 4"/>
</dbReference>
<dbReference type="GO" id="GO:0005829">
    <property type="term" value="C:cytosol"/>
    <property type="evidence" value="ECO:0000318"/>
    <property type="project" value="GO_Central"/>
</dbReference>
<dbReference type="GO" id="GO:0005634">
    <property type="term" value="C:nucleus"/>
    <property type="evidence" value="ECO:0000318"/>
    <property type="project" value="GO_Central"/>
</dbReference>
<dbReference type="GO" id="GO:0008541">
    <property type="term" value="C:proteasome regulatory particle, lid subcomplex"/>
    <property type="evidence" value="ECO:0000318"/>
    <property type="project" value="GO_Central"/>
</dbReference>
<dbReference type="GO" id="GO:0005198">
    <property type="term" value="F:structural molecule activity"/>
    <property type="evidence" value="ECO:0000318"/>
    <property type="project" value="GO_Central"/>
</dbReference>
<dbReference type="GO" id="GO:0006511">
    <property type="term" value="P:ubiquitin-dependent protein catabolic process"/>
    <property type="evidence" value="ECO:0000250"/>
    <property type="project" value="dictyBase"/>
</dbReference>
<dbReference type="InterPro" id="IPR000717">
    <property type="entry name" value="PCI_dom"/>
</dbReference>
<dbReference type="InterPro" id="IPR054179">
    <property type="entry name" value="PSD13_N"/>
</dbReference>
<dbReference type="InterPro" id="IPR035298">
    <property type="entry name" value="PSMD13"/>
</dbReference>
<dbReference type="InterPro" id="IPR036390">
    <property type="entry name" value="WH_DNA-bd_sf"/>
</dbReference>
<dbReference type="PANTHER" id="PTHR10539">
    <property type="entry name" value="26S PROTEASOME NON-ATPASE REGULATORY SUBUNIT 13"/>
    <property type="match status" value="1"/>
</dbReference>
<dbReference type="PANTHER" id="PTHR10539:SF0">
    <property type="entry name" value="26S PROTEASOME NON-ATPASE REGULATORY SUBUNIT 13"/>
    <property type="match status" value="1"/>
</dbReference>
<dbReference type="Pfam" id="PF01399">
    <property type="entry name" value="PCI"/>
    <property type="match status" value="1"/>
</dbReference>
<dbReference type="Pfam" id="PF22037">
    <property type="entry name" value="PSD13_N"/>
    <property type="match status" value="1"/>
</dbReference>
<dbReference type="SMART" id="SM00088">
    <property type="entry name" value="PINT"/>
    <property type="match status" value="1"/>
</dbReference>
<dbReference type="SUPFAM" id="SSF46785">
    <property type="entry name" value="Winged helix' DNA-binding domain"/>
    <property type="match status" value="1"/>
</dbReference>
<dbReference type="PROSITE" id="PS50250">
    <property type="entry name" value="PCI"/>
    <property type="match status" value="1"/>
</dbReference>
<keyword id="KW-0647">Proteasome</keyword>
<keyword id="KW-1185">Reference proteome</keyword>
<reference key="1">
    <citation type="journal article" date="2005" name="Nature">
        <title>The genome of the social amoeba Dictyostelium discoideum.</title>
        <authorList>
            <person name="Eichinger L."/>
            <person name="Pachebat J.A."/>
            <person name="Gloeckner G."/>
            <person name="Rajandream M.A."/>
            <person name="Sucgang R."/>
            <person name="Berriman M."/>
            <person name="Song J."/>
            <person name="Olsen R."/>
            <person name="Szafranski K."/>
            <person name="Xu Q."/>
            <person name="Tunggal B."/>
            <person name="Kummerfeld S."/>
            <person name="Madera M."/>
            <person name="Konfortov B.A."/>
            <person name="Rivero F."/>
            <person name="Bankier A.T."/>
            <person name="Lehmann R."/>
            <person name="Hamlin N."/>
            <person name="Davies R."/>
            <person name="Gaudet P."/>
            <person name="Fey P."/>
            <person name="Pilcher K."/>
            <person name="Chen G."/>
            <person name="Saunders D."/>
            <person name="Sodergren E.J."/>
            <person name="Davis P."/>
            <person name="Kerhornou A."/>
            <person name="Nie X."/>
            <person name="Hall N."/>
            <person name="Anjard C."/>
            <person name="Hemphill L."/>
            <person name="Bason N."/>
            <person name="Farbrother P."/>
            <person name="Desany B."/>
            <person name="Just E."/>
            <person name="Morio T."/>
            <person name="Rost R."/>
            <person name="Churcher C.M."/>
            <person name="Cooper J."/>
            <person name="Haydock S."/>
            <person name="van Driessche N."/>
            <person name="Cronin A."/>
            <person name="Goodhead I."/>
            <person name="Muzny D.M."/>
            <person name="Mourier T."/>
            <person name="Pain A."/>
            <person name="Lu M."/>
            <person name="Harper D."/>
            <person name="Lindsay R."/>
            <person name="Hauser H."/>
            <person name="James K.D."/>
            <person name="Quiles M."/>
            <person name="Madan Babu M."/>
            <person name="Saito T."/>
            <person name="Buchrieser C."/>
            <person name="Wardroper A."/>
            <person name="Felder M."/>
            <person name="Thangavelu M."/>
            <person name="Johnson D."/>
            <person name="Knights A."/>
            <person name="Loulseged H."/>
            <person name="Mungall K.L."/>
            <person name="Oliver K."/>
            <person name="Price C."/>
            <person name="Quail M.A."/>
            <person name="Urushihara H."/>
            <person name="Hernandez J."/>
            <person name="Rabbinowitsch E."/>
            <person name="Steffen D."/>
            <person name="Sanders M."/>
            <person name="Ma J."/>
            <person name="Kohara Y."/>
            <person name="Sharp S."/>
            <person name="Simmonds M.N."/>
            <person name="Spiegler S."/>
            <person name="Tivey A."/>
            <person name="Sugano S."/>
            <person name="White B."/>
            <person name="Walker D."/>
            <person name="Woodward J.R."/>
            <person name="Winckler T."/>
            <person name="Tanaka Y."/>
            <person name="Shaulsky G."/>
            <person name="Schleicher M."/>
            <person name="Weinstock G.M."/>
            <person name="Rosenthal A."/>
            <person name="Cox E.C."/>
            <person name="Chisholm R.L."/>
            <person name="Gibbs R.A."/>
            <person name="Loomis W.F."/>
            <person name="Platzer M."/>
            <person name="Kay R.R."/>
            <person name="Williams J.G."/>
            <person name="Dear P.H."/>
            <person name="Noegel A.A."/>
            <person name="Barrell B.G."/>
            <person name="Kuspa A."/>
        </authorList>
    </citation>
    <scope>NUCLEOTIDE SEQUENCE [LARGE SCALE GENOMIC DNA]</scope>
    <source>
        <strain>AX4</strain>
    </source>
</reference>
<proteinExistence type="evidence at transcript level"/>